<feature type="chain" id="PRO_0000223616" description="Barrier-to-autointegration factor-like protein">
    <location>
        <begin position="1"/>
        <end position="90"/>
    </location>
</feature>
<protein>
    <recommendedName>
        <fullName>Barrier-to-autointegration factor-like protein</fullName>
        <shortName>BAF-L</shortName>
    </recommendedName>
    <alternativeName>
        <fullName>Barrier-to-autointegration factor 2</fullName>
    </alternativeName>
</protein>
<dbReference type="EMBL" id="BC108144">
    <property type="protein sequence ID" value="AAI08145.1"/>
    <property type="molecule type" value="mRNA"/>
</dbReference>
<dbReference type="RefSeq" id="NP_001035649.1">
    <property type="nucleotide sequence ID" value="NM_001040559.2"/>
</dbReference>
<dbReference type="RefSeq" id="XP_005214428.1">
    <property type="nucleotide sequence ID" value="XM_005214371.3"/>
</dbReference>
<dbReference type="RefSeq" id="XP_024856526.1">
    <property type="nucleotide sequence ID" value="XM_025000758.2"/>
</dbReference>
<dbReference type="SMR" id="Q32PE7"/>
<dbReference type="FunCoup" id="Q32PE7">
    <property type="interactions" value="115"/>
</dbReference>
<dbReference type="STRING" id="9913.ENSBTAP00000074323"/>
<dbReference type="PaxDb" id="9913-ENSBTAP00000005871"/>
<dbReference type="GeneID" id="538599"/>
<dbReference type="KEGG" id="bta:538599"/>
<dbReference type="CTD" id="140836"/>
<dbReference type="VEuPathDB" id="HostDB:ENSBTAG00000004474"/>
<dbReference type="eggNOG" id="KOG4233">
    <property type="taxonomic scope" value="Eukaryota"/>
</dbReference>
<dbReference type="HOGENOM" id="CLU_167806_0_0_1"/>
<dbReference type="InParanoid" id="Q32PE7"/>
<dbReference type="OrthoDB" id="9997163at2759"/>
<dbReference type="TreeFam" id="TF315060"/>
<dbReference type="Proteomes" id="UP000009136">
    <property type="component" value="Chromosome 13"/>
</dbReference>
<dbReference type="Bgee" id="ENSBTAG00000004474">
    <property type="expression patterns" value="Expressed in semen and 26 other cell types or tissues"/>
</dbReference>
<dbReference type="GO" id="GO:0000793">
    <property type="term" value="C:condensed chromosome"/>
    <property type="evidence" value="ECO:0000318"/>
    <property type="project" value="GO_Central"/>
</dbReference>
<dbReference type="GO" id="GO:0005737">
    <property type="term" value="C:cytoplasm"/>
    <property type="evidence" value="ECO:0007669"/>
    <property type="project" value="UniProtKB-SubCell"/>
</dbReference>
<dbReference type="GO" id="GO:0005634">
    <property type="term" value="C:nucleus"/>
    <property type="evidence" value="ECO:0000318"/>
    <property type="project" value="GO_Central"/>
</dbReference>
<dbReference type="GO" id="GO:0003677">
    <property type="term" value="F:DNA binding"/>
    <property type="evidence" value="ECO:0000318"/>
    <property type="project" value="GO_Central"/>
</dbReference>
<dbReference type="GO" id="GO:0051276">
    <property type="term" value="P:chromosome organization"/>
    <property type="evidence" value="ECO:0000318"/>
    <property type="project" value="GO_Central"/>
</dbReference>
<dbReference type="FunFam" id="1.10.150.40:FF:000002">
    <property type="entry name" value="Barrier to autointegration factor 2"/>
    <property type="match status" value="1"/>
</dbReference>
<dbReference type="Gene3D" id="1.10.150.40">
    <property type="entry name" value="Barrier-to-autointegration factor, BAF"/>
    <property type="match status" value="1"/>
</dbReference>
<dbReference type="InterPro" id="IPR051387">
    <property type="entry name" value="BAF"/>
</dbReference>
<dbReference type="InterPro" id="IPR004122">
    <property type="entry name" value="BAF_prot"/>
</dbReference>
<dbReference type="InterPro" id="IPR036617">
    <property type="entry name" value="BAF_sf"/>
</dbReference>
<dbReference type="PANTHER" id="PTHR47507">
    <property type="entry name" value="BARRIER TO AUTOINTEGRATION FACTOR 2"/>
    <property type="match status" value="1"/>
</dbReference>
<dbReference type="PANTHER" id="PTHR47507:SF4">
    <property type="entry name" value="BARRIER-TO-AUTOINTEGRATION FACTOR-LIKE PROTEIN"/>
    <property type="match status" value="1"/>
</dbReference>
<dbReference type="Pfam" id="PF02961">
    <property type="entry name" value="SAM_BAF"/>
    <property type="match status" value="1"/>
</dbReference>
<dbReference type="SMART" id="SM01023">
    <property type="entry name" value="BAF"/>
    <property type="match status" value="1"/>
</dbReference>
<dbReference type="SUPFAM" id="SSF47798">
    <property type="entry name" value="Barrier-to-autointegration factor, BAF"/>
    <property type="match status" value="1"/>
</dbReference>
<sequence>MDHMSPRLRAFLSEPIGEKDVAWVDGISHELAINLVTKGFNKAYVLLGQFLLMHKREAEFQKWLICCCGATEFEARECSNCLKEWCSCFL</sequence>
<keyword id="KW-0963">Cytoplasm</keyword>
<keyword id="KW-0539">Nucleus</keyword>
<keyword id="KW-1185">Reference proteome</keyword>
<comment type="function">
    <text evidence="1">May play a role in BANF1 regulation and influence tissue-specific roles of BANF1.</text>
</comment>
<comment type="subunit">
    <text evidence="1">Homodimer. Heterodimerizes with BANF1 (By similarity).</text>
</comment>
<comment type="subcellular location">
    <subcellularLocation>
        <location>Nucleus</location>
    </subcellularLocation>
    <subcellularLocation>
        <location evidence="1">Cytoplasm</location>
    </subcellularLocation>
</comment>
<comment type="similarity">
    <text evidence="2">Belongs to the BAF family.</text>
</comment>
<evidence type="ECO:0000250" key="1"/>
<evidence type="ECO:0000305" key="2"/>
<accession>Q32PE7</accession>
<reference key="1">
    <citation type="submission" date="2005-10" db="EMBL/GenBank/DDBJ databases">
        <authorList>
            <consortium name="NIH - Mammalian Gene Collection (MGC) project"/>
        </authorList>
    </citation>
    <scope>NUCLEOTIDE SEQUENCE [LARGE SCALE MRNA]</scope>
    <source>
        <strain>Crossbred X Angus</strain>
        <tissue>Liver</tissue>
    </source>
</reference>
<organism>
    <name type="scientific">Bos taurus</name>
    <name type="common">Bovine</name>
    <dbReference type="NCBI Taxonomy" id="9913"/>
    <lineage>
        <taxon>Eukaryota</taxon>
        <taxon>Metazoa</taxon>
        <taxon>Chordata</taxon>
        <taxon>Craniata</taxon>
        <taxon>Vertebrata</taxon>
        <taxon>Euteleostomi</taxon>
        <taxon>Mammalia</taxon>
        <taxon>Eutheria</taxon>
        <taxon>Laurasiatheria</taxon>
        <taxon>Artiodactyla</taxon>
        <taxon>Ruminantia</taxon>
        <taxon>Pecora</taxon>
        <taxon>Bovidae</taxon>
        <taxon>Bovinae</taxon>
        <taxon>Bos</taxon>
    </lineage>
</organism>
<name>BAFL_BOVIN</name>
<proteinExistence type="inferred from homology"/>
<gene>
    <name type="primary">BANF2</name>
    <name type="synonym">BAFL</name>
</gene>